<organism>
    <name type="scientific">Helicobacter pylori (strain ATCC 700392 / 26695)</name>
    <name type="common">Campylobacter pylori</name>
    <dbReference type="NCBI Taxonomy" id="85962"/>
    <lineage>
        <taxon>Bacteria</taxon>
        <taxon>Pseudomonadati</taxon>
        <taxon>Campylobacterota</taxon>
        <taxon>Epsilonproteobacteria</taxon>
        <taxon>Campylobacterales</taxon>
        <taxon>Helicobacteraceae</taxon>
        <taxon>Helicobacter</taxon>
    </lineage>
</organism>
<reference key="1">
    <citation type="journal article" date="1997" name="Nature">
        <title>The complete genome sequence of the gastric pathogen Helicobacter pylori.</title>
        <authorList>
            <person name="Tomb J.-F."/>
            <person name="White O."/>
            <person name="Kerlavage A.R."/>
            <person name="Clayton R.A."/>
            <person name="Sutton G.G."/>
            <person name="Fleischmann R.D."/>
            <person name="Ketchum K.A."/>
            <person name="Klenk H.-P."/>
            <person name="Gill S.R."/>
            <person name="Dougherty B.A."/>
            <person name="Nelson K.E."/>
            <person name="Quackenbush J."/>
            <person name="Zhou L."/>
            <person name="Kirkness E.F."/>
            <person name="Peterson S.N."/>
            <person name="Loftus B.J."/>
            <person name="Richardson D.L."/>
            <person name="Dodson R.J."/>
            <person name="Khalak H.G."/>
            <person name="Glodek A."/>
            <person name="McKenney K."/>
            <person name="FitzGerald L.M."/>
            <person name="Lee N."/>
            <person name="Adams M.D."/>
            <person name="Hickey E.K."/>
            <person name="Berg D.E."/>
            <person name="Gocayne J.D."/>
            <person name="Utterback T.R."/>
            <person name="Peterson J.D."/>
            <person name="Kelley J.M."/>
            <person name="Cotton M.D."/>
            <person name="Weidman J.F."/>
            <person name="Fujii C."/>
            <person name="Bowman C."/>
            <person name="Watthey L."/>
            <person name="Wallin E."/>
            <person name="Hayes W.S."/>
            <person name="Borodovsky M."/>
            <person name="Karp P.D."/>
            <person name="Smith H.O."/>
            <person name="Fraser C.M."/>
            <person name="Venter J.C."/>
        </authorList>
    </citation>
    <scope>NUCLEOTIDE SEQUENCE [LARGE SCALE GENOMIC DNA]</scope>
    <source>
        <strain>ATCC 700392 / 26695</strain>
    </source>
</reference>
<reference key="2">
    <citation type="journal article" date="2005" name="J. Biol. Chem.">
        <title>Characterization of a new pantothenate kinase isoform from Helicobacter pylori.</title>
        <authorList>
            <person name="Brand L.A."/>
            <person name="Strauss E."/>
        </authorList>
    </citation>
    <scope>FUNCTION</scope>
    <scope>CHARACTERIZATION</scope>
    <scope>ACTIVITY REGULATION</scope>
    <scope>KINETIC PARAMETERS</scope>
    <source>
        <strain>ATCC 700392 / 26695</strain>
    </source>
</reference>
<reference key="3">
    <citation type="journal article" date="2006" name="J. Bacteriol.">
        <title>Crystal structure of a type III pantothenate kinase: insight into the mechanism of an essential coenzyme A biosynthetic enzyme universally distributed in bacteria.</title>
        <authorList>
            <person name="Yang K."/>
            <person name="Eyobo Y."/>
            <person name="Brand L.A."/>
            <person name="Martynowski D."/>
            <person name="Tomchick D."/>
            <person name="Strauss E."/>
            <person name="Zhang H."/>
        </authorList>
    </citation>
    <scope>MUTAGENESIS OF ASP-17; ASP-87 AND ASP-102</scope>
    <source>
        <strain>ATCC 700392 / 26695</strain>
    </source>
</reference>
<reference key="4">
    <citation type="journal article" date="2006" name="Structure">
        <title>Prokaryotic type II and type III pantothenate kinases: the same monomer fold creates dimers with distinct catalytic properties.</title>
        <authorList>
            <person name="Hong B.S."/>
            <person name="Yun M.K."/>
            <person name="Zhang Y.-M."/>
            <person name="Chohnan S."/>
            <person name="Rock C.O."/>
            <person name="White S.W."/>
            <person name="Jackowski S."/>
            <person name="Park H.-W."/>
            <person name="Leonardi R."/>
        </authorList>
    </citation>
    <scope>FUNCTION</scope>
    <scope>COFACTOR</scope>
    <source>
        <strain>ATCC 700392 / 26695</strain>
    </source>
</reference>
<feature type="chain" id="PRO_0000267545" description="Type III pantothenate kinase">
    <location>
        <begin position="1"/>
        <end position="223"/>
    </location>
</feature>
<feature type="active site" description="Proton acceptor" evidence="2">
    <location>
        <position position="87"/>
    </location>
</feature>
<feature type="binding site" evidence="1">
    <location>
        <begin position="17"/>
        <end position="24"/>
    </location>
    <ligand>
        <name>ATP</name>
        <dbReference type="ChEBI" id="CHEBI:30616"/>
    </ligand>
</feature>
<feature type="binding site" evidence="1">
    <location>
        <position position="81"/>
    </location>
    <ligand>
        <name>substrate</name>
    </ligand>
</feature>
<feature type="binding site" evidence="1">
    <location>
        <begin position="85"/>
        <end position="88"/>
    </location>
    <ligand>
        <name>substrate</name>
    </ligand>
</feature>
<feature type="binding site" evidence="2">
    <location>
        <position position="102"/>
    </location>
    <ligand>
        <name>K(+)</name>
        <dbReference type="ChEBI" id="CHEBI:29103"/>
    </ligand>
</feature>
<feature type="binding site" evidence="2">
    <location>
        <position position="105"/>
    </location>
    <ligand>
        <name>ATP</name>
        <dbReference type="ChEBI" id="CHEBI:30616"/>
    </ligand>
</feature>
<feature type="binding site" evidence="1">
    <location>
        <position position="157"/>
    </location>
    <ligand>
        <name>substrate</name>
    </ligand>
</feature>
<feature type="mutagenesis site" description="5% of wild-type activity." evidence="4">
    <original>D</original>
    <variation>N</variation>
    <location>
        <position position="17"/>
    </location>
</feature>
<feature type="mutagenesis site" description="3% of wild-type activity." evidence="4">
    <original>D</original>
    <variation>E</variation>
    <location>
        <position position="87"/>
    </location>
</feature>
<feature type="mutagenesis site" description="3% of wild-type activity." evidence="4">
    <original>D</original>
    <variation>N</variation>
    <location>
        <position position="87"/>
    </location>
</feature>
<feature type="mutagenesis site" description="3% of wild-type activity." evidence="4">
    <original>D</original>
    <variation>N</variation>
    <variation>E</variation>
    <location>
        <position position="102"/>
    </location>
</feature>
<protein>
    <recommendedName>
        <fullName>Type III pantothenate kinase</fullName>
        <ecNumber>2.7.1.33</ecNumber>
    </recommendedName>
    <alternativeName>
        <fullName>PanK-III</fullName>
    </alternativeName>
    <alternativeName>
        <fullName>Pantothenic acid kinase</fullName>
    </alternativeName>
</protein>
<proteinExistence type="evidence at protein level"/>
<gene>
    <name type="primary">coaX</name>
    <name type="synonym">coaA</name>
    <name type="ordered locus">HP_0862</name>
</gene>
<keyword id="KW-0067">ATP-binding</keyword>
<keyword id="KW-0173">Coenzyme A biosynthesis</keyword>
<keyword id="KW-0963">Cytoplasm</keyword>
<keyword id="KW-0418">Kinase</keyword>
<keyword id="KW-0479">Metal-binding</keyword>
<keyword id="KW-0547">Nucleotide-binding</keyword>
<keyword id="KW-0630">Potassium</keyword>
<keyword id="KW-1185">Reference proteome</keyword>
<keyword id="KW-0808">Transferase</keyword>
<accession>O25533</accession>
<sequence length="223" mass="24655">MPARQSFTDLKNLVLCDIGNTRIHFAQNYQLFSSAKEDLKRLGIQKEIFYISVNEENEKALLNCYPNAKNIAGFFHLETDYVGLGIDRQMACLAVNNGVVVDAGSAITIDLIKEGKHLGGCILPGLAQYIHAYKKSAKILEQPFKALDSLEVLPKSTRDAVNYGMVLSVIACIQHLAKNQKIYLCGGDAKYLSAFLPHSVCKERLVFDGMEIALKKAGILECK</sequence>
<comment type="function">
    <text evidence="3 5">Catalyzes the phosphorylation of pantothenate (Pan), the first step in CoA biosynthesis. Can also utilize CTP or GTP instead of ATP as a phosphoryl donor, albeit to a lesser extent.</text>
</comment>
<comment type="catalytic activity">
    <reaction>
        <text>(R)-pantothenate + ATP = (R)-4'-phosphopantothenate + ADP + H(+)</text>
        <dbReference type="Rhea" id="RHEA:16373"/>
        <dbReference type="ChEBI" id="CHEBI:10986"/>
        <dbReference type="ChEBI" id="CHEBI:15378"/>
        <dbReference type="ChEBI" id="CHEBI:29032"/>
        <dbReference type="ChEBI" id="CHEBI:30616"/>
        <dbReference type="ChEBI" id="CHEBI:456216"/>
        <dbReference type="EC" id="2.7.1.33"/>
    </reaction>
</comment>
<comment type="cofactor">
    <cofactor evidence="5">
        <name>NH4(+)</name>
        <dbReference type="ChEBI" id="CHEBI:28938"/>
    </cofactor>
    <cofactor evidence="5">
        <name>K(+)</name>
        <dbReference type="ChEBI" id="CHEBI:29103"/>
    </cofactor>
    <text evidence="5">Monovalent cations. Ammonium or potassium.</text>
</comment>
<comment type="activity regulation">
    <text evidence="3">Not regulated by feedback inhibition by CoA and its thioesters as described for many other pantothenate kinases. Not inhibited by N-pentylpantothenamide (N5-Pan), and this compound cannot act as a substrate either.</text>
</comment>
<comment type="biophysicochemical properties">
    <kinetics>
        <KM evidence="3">101 uM for pantothenate</KM>
        <KM evidence="3">9.6 mM for ATP</KM>
    </kinetics>
</comment>
<comment type="pathway">
    <text>Cofactor biosynthesis; coenzyme A biosynthesis; CoA from (R)-pantothenate: step 1/5.</text>
</comment>
<comment type="subunit">
    <text evidence="1">Homodimer.</text>
</comment>
<comment type="interaction">
    <interactant intactId="EBI-528040">
        <id>O25533</id>
    </interactant>
    <interactant intactId="EBI-528054">
        <id>O26009</id>
        <label>tmk</label>
    </interactant>
    <organismsDiffer>false</organismsDiffer>
    <experiments>2</experiments>
</comment>
<comment type="subcellular location">
    <subcellularLocation>
        <location evidence="1">Cytoplasm</location>
    </subcellularLocation>
</comment>
<comment type="similarity">
    <text evidence="6">Belongs to the type III pantothenate kinase family.</text>
</comment>
<dbReference type="EC" id="2.7.1.33"/>
<dbReference type="EMBL" id="AE000511">
    <property type="protein sequence ID" value="AAD07916.1"/>
    <property type="molecule type" value="Genomic_DNA"/>
</dbReference>
<dbReference type="PIR" id="F64627">
    <property type="entry name" value="F64627"/>
</dbReference>
<dbReference type="RefSeq" id="NP_207656.1">
    <property type="nucleotide sequence ID" value="NC_000915.1"/>
</dbReference>
<dbReference type="RefSeq" id="WP_001111589.1">
    <property type="nucleotide sequence ID" value="NC_018939.1"/>
</dbReference>
<dbReference type="SMR" id="O25533"/>
<dbReference type="DIP" id="DIP-3271N"/>
<dbReference type="IntAct" id="O25533">
    <property type="interactions" value="13"/>
</dbReference>
<dbReference type="MINT" id="O25533"/>
<dbReference type="STRING" id="85962.HP_0862"/>
<dbReference type="PaxDb" id="85962-C694_04415"/>
<dbReference type="DNASU" id="899391"/>
<dbReference type="EnsemblBacteria" id="AAD07916">
    <property type="protein sequence ID" value="AAD07916"/>
    <property type="gene ID" value="HP_0862"/>
</dbReference>
<dbReference type="KEGG" id="heo:C694_04415"/>
<dbReference type="KEGG" id="hpy:HP_0862"/>
<dbReference type="PATRIC" id="fig|85962.47.peg.916"/>
<dbReference type="eggNOG" id="COG1521">
    <property type="taxonomic scope" value="Bacteria"/>
</dbReference>
<dbReference type="InParanoid" id="O25533"/>
<dbReference type="OrthoDB" id="5347692at2"/>
<dbReference type="PhylomeDB" id="O25533"/>
<dbReference type="BioCyc" id="MetaCyc:HP0862-MONOMER"/>
<dbReference type="SABIO-RK" id="O25533"/>
<dbReference type="UniPathway" id="UPA00241">
    <property type="reaction ID" value="UER00352"/>
</dbReference>
<dbReference type="Proteomes" id="UP000000429">
    <property type="component" value="Chromosome"/>
</dbReference>
<dbReference type="GO" id="GO:0005737">
    <property type="term" value="C:cytoplasm"/>
    <property type="evidence" value="ECO:0007669"/>
    <property type="project" value="UniProtKB-SubCell"/>
</dbReference>
<dbReference type="GO" id="GO:0005524">
    <property type="term" value="F:ATP binding"/>
    <property type="evidence" value="ECO:0007669"/>
    <property type="project" value="UniProtKB-UniRule"/>
</dbReference>
<dbReference type="GO" id="GO:0046872">
    <property type="term" value="F:metal ion binding"/>
    <property type="evidence" value="ECO:0007669"/>
    <property type="project" value="UniProtKB-KW"/>
</dbReference>
<dbReference type="GO" id="GO:0004594">
    <property type="term" value="F:pantothenate kinase activity"/>
    <property type="evidence" value="ECO:0007669"/>
    <property type="project" value="UniProtKB-UniRule"/>
</dbReference>
<dbReference type="GO" id="GO:0015937">
    <property type="term" value="P:coenzyme A biosynthetic process"/>
    <property type="evidence" value="ECO:0007669"/>
    <property type="project" value="UniProtKB-UniRule"/>
</dbReference>
<dbReference type="CDD" id="cd24015">
    <property type="entry name" value="ASKHA_NBD_PanK-III"/>
    <property type="match status" value="1"/>
</dbReference>
<dbReference type="Gene3D" id="3.30.420.40">
    <property type="match status" value="2"/>
</dbReference>
<dbReference type="HAMAP" id="MF_01274">
    <property type="entry name" value="Pantothen_kinase_3"/>
    <property type="match status" value="1"/>
</dbReference>
<dbReference type="InterPro" id="IPR043129">
    <property type="entry name" value="ATPase_NBD"/>
</dbReference>
<dbReference type="InterPro" id="IPR004619">
    <property type="entry name" value="Type_III_PanK"/>
</dbReference>
<dbReference type="NCBIfam" id="TIGR00671">
    <property type="entry name" value="baf"/>
    <property type="match status" value="1"/>
</dbReference>
<dbReference type="NCBIfam" id="NF009872">
    <property type="entry name" value="PRK13333.1"/>
    <property type="match status" value="1"/>
</dbReference>
<dbReference type="PANTHER" id="PTHR34265">
    <property type="entry name" value="TYPE III PANTOTHENATE KINASE"/>
    <property type="match status" value="1"/>
</dbReference>
<dbReference type="PANTHER" id="PTHR34265:SF1">
    <property type="entry name" value="TYPE III PANTOTHENATE KINASE"/>
    <property type="match status" value="1"/>
</dbReference>
<dbReference type="Pfam" id="PF03309">
    <property type="entry name" value="Pan_kinase"/>
    <property type="match status" value="1"/>
</dbReference>
<dbReference type="SUPFAM" id="SSF53067">
    <property type="entry name" value="Actin-like ATPase domain"/>
    <property type="match status" value="2"/>
</dbReference>
<name>COAX_HELPY</name>
<evidence type="ECO:0000250" key="1"/>
<evidence type="ECO:0000255" key="2"/>
<evidence type="ECO:0000269" key="3">
    <source>
    </source>
</evidence>
<evidence type="ECO:0000269" key="4">
    <source>
    </source>
</evidence>
<evidence type="ECO:0000269" key="5">
    <source>
    </source>
</evidence>
<evidence type="ECO:0000305" key="6"/>